<dbReference type="EMBL" id="M90351">
    <property type="status" value="NOT_ANNOTATED_CDS"/>
    <property type="molecule type" value="Genomic_DNA"/>
</dbReference>
<dbReference type="EMBL" id="X78898">
    <property type="protein sequence ID" value="CAA55505.1"/>
    <property type="molecule type" value="Genomic_DNA"/>
</dbReference>
<dbReference type="EMBL" id="Z71479">
    <property type="protein sequence ID" value="CAA96102.1"/>
    <property type="molecule type" value="Genomic_DNA"/>
</dbReference>
<dbReference type="EMBL" id="AY693307">
    <property type="protein sequence ID" value="AAT93326.1"/>
    <property type="molecule type" value="Genomic_DNA"/>
</dbReference>
<dbReference type="PIR" id="S50728">
    <property type="entry name" value="S50728"/>
</dbReference>
<dbReference type="IntAct" id="P40163">
    <property type="interactions" value="1"/>
</dbReference>
<dbReference type="STRING" id="4932.YNL203C"/>
<dbReference type="PaxDb" id="4932-YNL203C"/>
<dbReference type="EnsemblFungi" id="YNL203C_mRNA">
    <property type="protein sequence ID" value="YNL203C"/>
    <property type="gene ID" value="YNL203C"/>
</dbReference>
<dbReference type="AGR" id="SGD:S000005147"/>
<dbReference type="SGD" id="S000005147">
    <property type="gene designation" value="YNL203C"/>
</dbReference>
<dbReference type="HOGENOM" id="CLU_1349838_0_0_1"/>
<dbReference type="GO" id="GO:0016020">
    <property type="term" value="C:membrane"/>
    <property type="evidence" value="ECO:0007669"/>
    <property type="project" value="UniProtKB-SubCell"/>
</dbReference>
<feature type="chain" id="PRO_0000203394" description="Putative uncharacterized protein YNL203C">
    <location>
        <begin position="1"/>
        <end position="203"/>
    </location>
</feature>
<feature type="transmembrane region" description="Helical" evidence="1">
    <location>
        <begin position="89"/>
        <end position="109"/>
    </location>
</feature>
<feature type="sequence conflict" description="In Ref. 1; M90351." evidence="2" ref="1">
    <original>S</original>
    <variation>F</variation>
    <location>
        <position position="160"/>
    </location>
</feature>
<feature type="sequence conflict" description="In Ref. 1; M90351." evidence="2" ref="1">
    <original>Y</original>
    <variation>H</variation>
    <location>
        <position position="178"/>
    </location>
</feature>
<feature type="sequence conflict" description="In Ref. 1; M90351." evidence="2" ref="1">
    <original>K</original>
    <variation>T</variation>
    <location>
        <position position="183"/>
    </location>
</feature>
<feature type="sequence conflict" description="In Ref. 1; M90351." evidence="2" ref="1">
    <original>F</original>
    <variation>L</variation>
    <location>
        <position position="186"/>
    </location>
</feature>
<reference key="1">
    <citation type="submission" date="1992-05" db="EMBL/GenBank/DDBJ databases">
        <authorList>
            <person name="Coe J.G."/>
            <person name="Murray L.E."/>
            <person name="Dawes I.W."/>
        </authorList>
    </citation>
    <scope>NUCLEOTIDE SEQUENCE [GENOMIC DNA]</scope>
</reference>
<reference key="2">
    <citation type="journal article" date="1994" name="Yeast">
        <title>A 21.7 kb DNA segment on the left arm of yeast chromosome XIV carries WHI3, GCR2, SPX18, SPX19, an homologue to the heat shock gene SSB1 and 8 new open reading frames of unknown function.</title>
        <authorList>
            <person name="Jonniaux J.-L."/>
            <person name="Coster F."/>
            <person name="Purnelle B."/>
            <person name="Goffeau A."/>
        </authorList>
    </citation>
    <scope>NUCLEOTIDE SEQUENCE [GENOMIC DNA]</scope>
    <source>
        <strain>ATCC 96604 / S288c / FY1679</strain>
    </source>
</reference>
<reference key="3">
    <citation type="journal article" date="1997" name="Nature">
        <title>The nucleotide sequence of Saccharomyces cerevisiae chromosome XIV and its evolutionary implications.</title>
        <authorList>
            <person name="Philippsen P."/>
            <person name="Kleine K."/>
            <person name="Poehlmann R."/>
            <person name="Duesterhoeft A."/>
            <person name="Hamberg K."/>
            <person name="Hegemann J.H."/>
            <person name="Obermaier B."/>
            <person name="Urrestarazu L.A."/>
            <person name="Aert R."/>
            <person name="Albermann K."/>
            <person name="Altmann R."/>
            <person name="Andre B."/>
            <person name="Baladron V."/>
            <person name="Ballesta J.P.G."/>
            <person name="Becam A.-M."/>
            <person name="Beinhauer J.D."/>
            <person name="Boskovic J."/>
            <person name="Buitrago M.J."/>
            <person name="Bussereau F."/>
            <person name="Coster F."/>
            <person name="Crouzet M."/>
            <person name="D'Angelo M."/>
            <person name="Dal Pero F."/>
            <person name="De Antoni A."/>
            <person name="del Rey F."/>
            <person name="Doignon F."/>
            <person name="Domdey H."/>
            <person name="Dubois E."/>
            <person name="Fiedler T.A."/>
            <person name="Fleig U."/>
            <person name="Floeth M."/>
            <person name="Fritz C."/>
            <person name="Gaillardin C."/>
            <person name="Garcia-Cantalejo J.M."/>
            <person name="Glansdorff N."/>
            <person name="Goffeau A."/>
            <person name="Gueldener U."/>
            <person name="Herbert C.J."/>
            <person name="Heumann K."/>
            <person name="Heuss-Neitzel D."/>
            <person name="Hilbert H."/>
            <person name="Hinni K."/>
            <person name="Iraqui Houssaini I."/>
            <person name="Jacquet M."/>
            <person name="Jimenez A."/>
            <person name="Jonniaux J.-L."/>
            <person name="Karpfinger-Hartl L."/>
            <person name="Lanfranchi G."/>
            <person name="Lepingle A."/>
            <person name="Levesque H."/>
            <person name="Lyck R."/>
            <person name="Maftahi M."/>
            <person name="Mallet L."/>
            <person name="Maurer C.T.C."/>
            <person name="Messenguy F."/>
            <person name="Mewes H.-W."/>
            <person name="Moestl D."/>
            <person name="Nasr F."/>
            <person name="Nicaud J.-M."/>
            <person name="Niedenthal R.K."/>
            <person name="Pandolfo D."/>
            <person name="Pierard A."/>
            <person name="Piravandi E."/>
            <person name="Planta R.J."/>
            <person name="Pohl T.M."/>
            <person name="Purnelle B."/>
            <person name="Rebischung C."/>
            <person name="Remacha M.A."/>
            <person name="Revuelta J.L."/>
            <person name="Rinke M."/>
            <person name="Saiz J.E."/>
            <person name="Sartorello F."/>
            <person name="Scherens B."/>
            <person name="Sen-Gupta M."/>
            <person name="Soler-Mira A."/>
            <person name="Urbanus J.H.M."/>
            <person name="Valle G."/>
            <person name="Van Dyck L."/>
            <person name="Verhasselt P."/>
            <person name="Vierendeels F."/>
            <person name="Vissers S."/>
            <person name="Voet M."/>
            <person name="Volckaert G."/>
            <person name="Wach A."/>
            <person name="Wambutt R."/>
            <person name="Wedler H."/>
            <person name="Zollner A."/>
            <person name="Hani J."/>
        </authorList>
    </citation>
    <scope>NUCLEOTIDE SEQUENCE [LARGE SCALE GENOMIC DNA]</scope>
    <source>
        <strain>ATCC 204508 / S288c</strain>
    </source>
</reference>
<reference key="4">
    <citation type="journal article" date="2014" name="G3 (Bethesda)">
        <title>The reference genome sequence of Saccharomyces cerevisiae: Then and now.</title>
        <authorList>
            <person name="Engel S.R."/>
            <person name="Dietrich F.S."/>
            <person name="Fisk D.G."/>
            <person name="Binkley G."/>
            <person name="Balakrishnan R."/>
            <person name="Costanzo M.C."/>
            <person name="Dwight S.S."/>
            <person name="Hitz B.C."/>
            <person name="Karra K."/>
            <person name="Nash R.S."/>
            <person name="Weng S."/>
            <person name="Wong E.D."/>
            <person name="Lloyd P."/>
            <person name="Skrzypek M.S."/>
            <person name="Miyasato S.R."/>
            <person name="Simison M."/>
            <person name="Cherry J.M."/>
        </authorList>
    </citation>
    <scope>GENOME REANNOTATION</scope>
    <source>
        <strain>ATCC 204508 / S288c</strain>
    </source>
</reference>
<reference key="5">
    <citation type="journal article" date="2007" name="Genome Res.">
        <title>Approaching a complete repository of sequence-verified protein-encoding clones for Saccharomyces cerevisiae.</title>
        <authorList>
            <person name="Hu Y."/>
            <person name="Rolfs A."/>
            <person name="Bhullar B."/>
            <person name="Murthy T.V.S."/>
            <person name="Zhu C."/>
            <person name="Berger M.F."/>
            <person name="Camargo A.A."/>
            <person name="Kelley F."/>
            <person name="McCarron S."/>
            <person name="Jepson D."/>
            <person name="Richardson A."/>
            <person name="Raphael J."/>
            <person name="Moreira D."/>
            <person name="Taycher E."/>
            <person name="Zuo D."/>
            <person name="Mohr S."/>
            <person name="Kane M.F."/>
            <person name="Williamson J."/>
            <person name="Simpson A.J.G."/>
            <person name="Bulyk M.L."/>
            <person name="Harlow E."/>
            <person name="Marsischky G."/>
            <person name="Kolodner R.D."/>
            <person name="LaBaer J."/>
        </authorList>
    </citation>
    <scope>NUCLEOTIDE SEQUENCE [GENOMIC DNA]</scope>
    <source>
        <strain>ATCC 204508 / S288c</strain>
    </source>
</reference>
<gene>
    <name type="ordered locus">YNL203C</name>
    <name type="ORF">N1358</name>
</gene>
<sequence length="203" mass="22418">MEPFDFFNSFKHALAVLKLPSKSMSTTDLKAFGERFAKSHTKFPAAPAMTKSILPNFSTVFLTAFSTCSKLRTSTFAIAKTASLSFANCEIPFAACSVLSWSLPTIAALQPRRTKASVCTRHIVPAPPVTNATLPLNKSGLQEPSVTNLPSKVFAVFIVSMTRTYDLPNSKSVNIRNYELLFKFRFSLIWSLTLIPILFGKLQ</sequence>
<organism>
    <name type="scientific">Saccharomyces cerevisiae (strain ATCC 204508 / S288c)</name>
    <name type="common">Baker's yeast</name>
    <dbReference type="NCBI Taxonomy" id="559292"/>
    <lineage>
        <taxon>Eukaryota</taxon>
        <taxon>Fungi</taxon>
        <taxon>Dikarya</taxon>
        <taxon>Ascomycota</taxon>
        <taxon>Saccharomycotina</taxon>
        <taxon>Saccharomycetes</taxon>
        <taxon>Saccharomycetales</taxon>
        <taxon>Saccharomycetaceae</taxon>
        <taxon>Saccharomyces</taxon>
    </lineage>
</organism>
<keyword id="KW-0472">Membrane</keyword>
<keyword id="KW-0812">Transmembrane</keyword>
<keyword id="KW-1133">Transmembrane helix</keyword>
<accession>P40163</accession>
<comment type="subcellular location">
    <subcellularLocation>
        <location evidence="2">Membrane</location>
        <topology evidence="2">Single-pass membrane protein</topology>
    </subcellularLocation>
</comment>
<comment type="miscellaneous">
    <text evidence="2">Partially overlaps SPS19.</text>
</comment>
<comment type="caution">
    <text evidence="3">Product of a dubious gene prediction unlikely to encode a functional protein. Because of that it is not part of the S.cerevisiae S288c complete/reference proteome set.</text>
</comment>
<protein>
    <recommendedName>
        <fullName>Putative uncharacterized protein YNL203C</fullName>
    </recommendedName>
</protein>
<evidence type="ECO:0000255" key="1"/>
<evidence type="ECO:0000305" key="2"/>
<evidence type="ECO:0000305" key="3">
    <source>
    </source>
</evidence>
<name>YNU3_YEAST</name>
<proteinExistence type="uncertain"/>